<sequence length="464" mass="49480">MMYDDTIAAIATPPGEGGIGIVRISGKDALSILERIFVPVRPGRWKPYRMRYGHVVDGAGVRVDEALAVFMRGPRSFTAEDTVEISVHGGPLVVERVLQQALAAGARAANPGEFTMRAFLNGRIDLTQAEATLDIITARTTTALALAEAQLGGWLSHELRRIRALLIDPLAYCTALVDFPEDEVEPQDVETPLTAAVQALDTLVATAEQGIIYRQGARATLVGRPNAGKSSLLNALLRIDRAIVTPIPGTTRDTLEETANLGGVPVVLTDTAGIVESVDPVERLGVERSRQAVAQADLLLLVVEGVSQPVDDDREIVALTRDKRTVLIVNKIDLIDGADAVQECMKFLKCAYENLRGVPFDATIAVSALTGQGLDMLGATVARLLLGDSSPADGRLVTNVRHRDALARAATHARDALDSFRRGVSPDLLAVDLTAAINAIGEVTGEAVGDDLLHAIFSRFCIGK</sequence>
<keyword id="KW-0963">Cytoplasm</keyword>
<keyword id="KW-0342">GTP-binding</keyword>
<keyword id="KW-0378">Hydrolase</keyword>
<keyword id="KW-0460">Magnesium</keyword>
<keyword id="KW-0479">Metal-binding</keyword>
<keyword id="KW-0547">Nucleotide-binding</keyword>
<keyword id="KW-0630">Potassium</keyword>
<keyword id="KW-1185">Reference proteome</keyword>
<keyword id="KW-0819">tRNA processing</keyword>
<feature type="chain" id="PRO_0000345896" description="tRNA modification GTPase MnmE">
    <location>
        <begin position="1"/>
        <end position="464"/>
    </location>
</feature>
<feature type="domain" description="TrmE-type G">
    <location>
        <begin position="216"/>
        <end position="386"/>
    </location>
</feature>
<feature type="binding site" evidence="1">
    <location>
        <position position="23"/>
    </location>
    <ligand>
        <name>(6S)-5-formyl-5,6,7,8-tetrahydrofolate</name>
        <dbReference type="ChEBI" id="CHEBI:57457"/>
    </ligand>
</feature>
<feature type="binding site" evidence="1">
    <location>
        <position position="84"/>
    </location>
    <ligand>
        <name>(6S)-5-formyl-5,6,7,8-tetrahydrofolate</name>
        <dbReference type="ChEBI" id="CHEBI:57457"/>
    </ligand>
</feature>
<feature type="binding site" evidence="1">
    <location>
        <position position="123"/>
    </location>
    <ligand>
        <name>(6S)-5-formyl-5,6,7,8-tetrahydrofolate</name>
        <dbReference type="ChEBI" id="CHEBI:57457"/>
    </ligand>
</feature>
<feature type="binding site" evidence="1">
    <location>
        <begin position="226"/>
        <end position="231"/>
    </location>
    <ligand>
        <name>GTP</name>
        <dbReference type="ChEBI" id="CHEBI:37565"/>
    </ligand>
</feature>
<feature type="binding site" evidence="1">
    <location>
        <position position="226"/>
    </location>
    <ligand>
        <name>K(+)</name>
        <dbReference type="ChEBI" id="CHEBI:29103"/>
    </ligand>
</feature>
<feature type="binding site" evidence="1">
    <location>
        <position position="230"/>
    </location>
    <ligand>
        <name>Mg(2+)</name>
        <dbReference type="ChEBI" id="CHEBI:18420"/>
    </ligand>
</feature>
<feature type="binding site" evidence="1">
    <location>
        <begin position="245"/>
        <end position="251"/>
    </location>
    <ligand>
        <name>GTP</name>
        <dbReference type="ChEBI" id="CHEBI:37565"/>
    </ligand>
</feature>
<feature type="binding site" evidence="1">
    <location>
        <position position="245"/>
    </location>
    <ligand>
        <name>K(+)</name>
        <dbReference type="ChEBI" id="CHEBI:29103"/>
    </ligand>
</feature>
<feature type="binding site" evidence="1">
    <location>
        <position position="247"/>
    </location>
    <ligand>
        <name>K(+)</name>
        <dbReference type="ChEBI" id="CHEBI:29103"/>
    </ligand>
</feature>
<feature type="binding site" evidence="1">
    <location>
        <position position="250"/>
    </location>
    <ligand>
        <name>K(+)</name>
        <dbReference type="ChEBI" id="CHEBI:29103"/>
    </ligand>
</feature>
<feature type="binding site" evidence="1">
    <location>
        <position position="251"/>
    </location>
    <ligand>
        <name>Mg(2+)</name>
        <dbReference type="ChEBI" id="CHEBI:18420"/>
    </ligand>
</feature>
<feature type="binding site" evidence="1">
    <location>
        <begin position="270"/>
        <end position="273"/>
    </location>
    <ligand>
        <name>GTP</name>
        <dbReference type="ChEBI" id="CHEBI:37565"/>
    </ligand>
</feature>
<feature type="binding site" evidence="1">
    <location>
        <position position="464"/>
    </location>
    <ligand>
        <name>(6S)-5-formyl-5,6,7,8-tetrahydrofolate</name>
        <dbReference type="ChEBI" id="CHEBI:57457"/>
    </ligand>
</feature>
<evidence type="ECO:0000255" key="1">
    <source>
        <dbReference type="HAMAP-Rule" id="MF_00379"/>
    </source>
</evidence>
<reference key="1">
    <citation type="submission" date="2007-08" db="EMBL/GenBank/DDBJ databases">
        <title>Complete sequence of Roseiflexus castenholzii DSM 13941.</title>
        <authorList>
            <consortium name="US DOE Joint Genome Institute"/>
            <person name="Copeland A."/>
            <person name="Lucas S."/>
            <person name="Lapidus A."/>
            <person name="Barry K."/>
            <person name="Glavina del Rio T."/>
            <person name="Dalin E."/>
            <person name="Tice H."/>
            <person name="Pitluck S."/>
            <person name="Thompson L.S."/>
            <person name="Brettin T."/>
            <person name="Bruce D."/>
            <person name="Detter J.C."/>
            <person name="Han C."/>
            <person name="Tapia R."/>
            <person name="Schmutz J."/>
            <person name="Larimer F."/>
            <person name="Land M."/>
            <person name="Hauser L."/>
            <person name="Kyrpides N."/>
            <person name="Mikhailova N."/>
            <person name="Bryant D.A."/>
            <person name="Hanada S."/>
            <person name="Tsukatani Y."/>
            <person name="Richardson P."/>
        </authorList>
    </citation>
    <scope>NUCLEOTIDE SEQUENCE [LARGE SCALE GENOMIC DNA]</scope>
    <source>
        <strain>DSM 13941 / HLO8</strain>
    </source>
</reference>
<organism>
    <name type="scientific">Roseiflexus castenholzii (strain DSM 13941 / HLO8)</name>
    <dbReference type="NCBI Taxonomy" id="383372"/>
    <lineage>
        <taxon>Bacteria</taxon>
        <taxon>Bacillati</taxon>
        <taxon>Chloroflexota</taxon>
        <taxon>Chloroflexia</taxon>
        <taxon>Chloroflexales</taxon>
        <taxon>Roseiflexineae</taxon>
        <taxon>Roseiflexaceae</taxon>
        <taxon>Roseiflexus</taxon>
    </lineage>
</organism>
<name>MNME_ROSCS</name>
<accession>A7NN19</accession>
<comment type="function">
    <text evidence="1">Exhibits a very high intrinsic GTPase hydrolysis rate. Involved in the addition of a carboxymethylaminomethyl (cmnm) group at the wobble position (U34) of certain tRNAs, forming tRNA-cmnm(5)s(2)U34.</text>
</comment>
<comment type="cofactor">
    <cofactor evidence="1">
        <name>K(+)</name>
        <dbReference type="ChEBI" id="CHEBI:29103"/>
    </cofactor>
    <text evidence="1">Binds 1 potassium ion per subunit.</text>
</comment>
<comment type="subunit">
    <text evidence="1">Homodimer. Heterotetramer of two MnmE and two MnmG subunits.</text>
</comment>
<comment type="subcellular location">
    <subcellularLocation>
        <location evidence="1">Cytoplasm</location>
    </subcellularLocation>
</comment>
<comment type="similarity">
    <text evidence="1">Belongs to the TRAFAC class TrmE-Era-EngA-EngB-Septin-like GTPase superfamily. TrmE GTPase family.</text>
</comment>
<dbReference type="EC" id="3.6.-.-" evidence="1"/>
<dbReference type="EMBL" id="CP000804">
    <property type="protein sequence ID" value="ABU58951.1"/>
    <property type="molecule type" value="Genomic_DNA"/>
</dbReference>
<dbReference type="RefSeq" id="WP_012121375.1">
    <property type="nucleotide sequence ID" value="NC_009767.1"/>
</dbReference>
<dbReference type="SMR" id="A7NN19"/>
<dbReference type="STRING" id="383372.Rcas_2889"/>
<dbReference type="KEGG" id="rca:Rcas_2889"/>
<dbReference type="eggNOG" id="COG0486">
    <property type="taxonomic scope" value="Bacteria"/>
</dbReference>
<dbReference type="HOGENOM" id="CLU_019624_4_1_0"/>
<dbReference type="OrthoDB" id="9805918at2"/>
<dbReference type="Proteomes" id="UP000000263">
    <property type="component" value="Chromosome"/>
</dbReference>
<dbReference type="GO" id="GO:0005829">
    <property type="term" value="C:cytosol"/>
    <property type="evidence" value="ECO:0007669"/>
    <property type="project" value="TreeGrafter"/>
</dbReference>
<dbReference type="GO" id="GO:0005525">
    <property type="term" value="F:GTP binding"/>
    <property type="evidence" value="ECO:0007669"/>
    <property type="project" value="UniProtKB-UniRule"/>
</dbReference>
<dbReference type="GO" id="GO:0003924">
    <property type="term" value="F:GTPase activity"/>
    <property type="evidence" value="ECO:0007669"/>
    <property type="project" value="UniProtKB-UniRule"/>
</dbReference>
<dbReference type="GO" id="GO:0046872">
    <property type="term" value="F:metal ion binding"/>
    <property type="evidence" value="ECO:0007669"/>
    <property type="project" value="UniProtKB-KW"/>
</dbReference>
<dbReference type="GO" id="GO:0030488">
    <property type="term" value="P:tRNA methylation"/>
    <property type="evidence" value="ECO:0007669"/>
    <property type="project" value="TreeGrafter"/>
</dbReference>
<dbReference type="GO" id="GO:0002098">
    <property type="term" value="P:tRNA wobble uridine modification"/>
    <property type="evidence" value="ECO:0007669"/>
    <property type="project" value="TreeGrafter"/>
</dbReference>
<dbReference type="CDD" id="cd04164">
    <property type="entry name" value="trmE"/>
    <property type="match status" value="1"/>
</dbReference>
<dbReference type="CDD" id="cd14858">
    <property type="entry name" value="TrmE_N"/>
    <property type="match status" value="1"/>
</dbReference>
<dbReference type="FunFam" id="3.30.1360.120:FF:000003">
    <property type="entry name" value="tRNA modification GTPase MnmE"/>
    <property type="match status" value="1"/>
</dbReference>
<dbReference type="Gene3D" id="3.40.50.300">
    <property type="entry name" value="P-loop containing nucleotide triphosphate hydrolases"/>
    <property type="match status" value="1"/>
</dbReference>
<dbReference type="Gene3D" id="3.30.1360.120">
    <property type="entry name" value="Probable tRNA modification gtpase trme, domain 1"/>
    <property type="match status" value="1"/>
</dbReference>
<dbReference type="Gene3D" id="1.20.120.430">
    <property type="entry name" value="tRNA modification GTPase MnmE domain 2"/>
    <property type="match status" value="1"/>
</dbReference>
<dbReference type="HAMAP" id="MF_00379">
    <property type="entry name" value="GTPase_MnmE"/>
    <property type="match status" value="1"/>
</dbReference>
<dbReference type="InterPro" id="IPR031168">
    <property type="entry name" value="G_TrmE"/>
</dbReference>
<dbReference type="InterPro" id="IPR006073">
    <property type="entry name" value="GTP-bd"/>
</dbReference>
<dbReference type="InterPro" id="IPR018948">
    <property type="entry name" value="GTP-bd_TrmE_N"/>
</dbReference>
<dbReference type="InterPro" id="IPR004520">
    <property type="entry name" value="GTPase_MnmE"/>
</dbReference>
<dbReference type="InterPro" id="IPR027368">
    <property type="entry name" value="MnmE_dom2"/>
</dbReference>
<dbReference type="InterPro" id="IPR025867">
    <property type="entry name" value="MnmE_helical"/>
</dbReference>
<dbReference type="InterPro" id="IPR027417">
    <property type="entry name" value="P-loop_NTPase"/>
</dbReference>
<dbReference type="InterPro" id="IPR005225">
    <property type="entry name" value="Small_GTP-bd"/>
</dbReference>
<dbReference type="InterPro" id="IPR027266">
    <property type="entry name" value="TrmE/GcvT_dom1"/>
</dbReference>
<dbReference type="NCBIfam" id="TIGR00450">
    <property type="entry name" value="mnmE_trmE_thdF"/>
    <property type="match status" value="1"/>
</dbReference>
<dbReference type="NCBIfam" id="TIGR00231">
    <property type="entry name" value="small_GTP"/>
    <property type="match status" value="1"/>
</dbReference>
<dbReference type="PANTHER" id="PTHR42714">
    <property type="entry name" value="TRNA MODIFICATION GTPASE GTPBP3"/>
    <property type="match status" value="1"/>
</dbReference>
<dbReference type="PANTHER" id="PTHR42714:SF2">
    <property type="entry name" value="TRNA MODIFICATION GTPASE GTPBP3, MITOCHONDRIAL"/>
    <property type="match status" value="1"/>
</dbReference>
<dbReference type="Pfam" id="PF01926">
    <property type="entry name" value="MMR_HSR1"/>
    <property type="match status" value="1"/>
</dbReference>
<dbReference type="Pfam" id="PF12631">
    <property type="entry name" value="MnmE_helical"/>
    <property type="match status" value="1"/>
</dbReference>
<dbReference type="Pfam" id="PF10396">
    <property type="entry name" value="TrmE_N"/>
    <property type="match status" value="1"/>
</dbReference>
<dbReference type="PRINTS" id="PR00326">
    <property type="entry name" value="GTP1OBG"/>
</dbReference>
<dbReference type="SUPFAM" id="SSF52540">
    <property type="entry name" value="P-loop containing nucleoside triphosphate hydrolases"/>
    <property type="match status" value="1"/>
</dbReference>
<dbReference type="PROSITE" id="PS51709">
    <property type="entry name" value="G_TRME"/>
    <property type="match status" value="1"/>
</dbReference>
<gene>
    <name evidence="1" type="primary">mnmE</name>
    <name evidence="1" type="synonym">trmE</name>
    <name type="ordered locus">Rcas_2889</name>
</gene>
<proteinExistence type="inferred from homology"/>
<protein>
    <recommendedName>
        <fullName evidence="1">tRNA modification GTPase MnmE</fullName>
        <ecNumber evidence="1">3.6.-.-</ecNumber>
    </recommendedName>
</protein>